<name>HRCA_CHLL3</name>
<sequence length="357" mass="39849">MGSRELNLRERQVLGIIIQLYVVTAAPVGSRYIARNYSLGLSDATIRNVMADLEAEGYISQPHTSAGRIPTDLGYRYYVDLIMKVQRIDEEEKRRMESDFGPISMEGRGTSAEVLVSAAKVLGSISRQLSVVLSPTLSNAVFEKLDMVLLSSTRMMVVLSIQSMFVKTIVMELQHELTRQKVDEVVDLLNERLSGLTLSEIRRSITRRLAGSSCDTNLKDLIVRSADSLFDESPIFERLYISGAEYIVEQPEFKQPERVRELITMIEDKFSVARLVEDIAPKQDLKRTAGHDVSISIGRENSALQAEDLTIVSAPYYAGSMVGTLGILGPKRMDYEHAVRVLNYMADCLTATLSDVN</sequence>
<protein>
    <recommendedName>
        <fullName evidence="1">Heat-inducible transcription repressor HrcA</fullName>
    </recommendedName>
</protein>
<feature type="chain" id="PRO_1000010441" description="Heat-inducible transcription repressor HrcA">
    <location>
        <begin position="1"/>
        <end position="357"/>
    </location>
</feature>
<gene>
    <name evidence="1" type="primary">hrcA</name>
    <name type="ordered locus">Plut_1489</name>
</gene>
<keyword id="KW-1185">Reference proteome</keyword>
<keyword id="KW-0678">Repressor</keyword>
<keyword id="KW-0346">Stress response</keyword>
<keyword id="KW-0804">Transcription</keyword>
<keyword id="KW-0805">Transcription regulation</keyword>
<evidence type="ECO:0000255" key="1">
    <source>
        <dbReference type="HAMAP-Rule" id="MF_00081"/>
    </source>
</evidence>
<comment type="function">
    <text evidence="1">Negative regulator of class I heat shock genes (grpE-dnaK-dnaJ and groELS operons). Prevents heat-shock induction of these operons.</text>
</comment>
<comment type="similarity">
    <text evidence="1">Belongs to the HrcA family.</text>
</comment>
<dbReference type="EMBL" id="CP000096">
    <property type="protein sequence ID" value="ABB24348.1"/>
    <property type="molecule type" value="Genomic_DNA"/>
</dbReference>
<dbReference type="RefSeq" id="WP_011358220.1">
    <property type="nucleotide sequence ID" value="NC_007512.1"/>
</dbReference>
<dbReference type="SMR" id="Q3B2T3"/>
<dbReference type="STRING" id="319225.Plut_1489"/>
<dbReference type="KEGG" id="plt:Plut_1489"/>
<dbReference type="eggNOG" id="COG1420">
    <property type="taxonomic scope" value="Bacteria"/>
</dbReference>
<dbReference type="HOGENOM" id="CLU_050019_1_0_10"/>
<dbReference type="OrthoDB" id="9783139at2"/>
<dbReference type="Proteomes" id="UP000002709">
    <property type="component" value="Chromosome"/>
</dbReference>
<dbReference type="GO" id="GO:0003677">
    <property type="term" value="F:DNA binding"/>
    <property type="evidence" value="ECO:0007669"/>
    <property type="project" value="InterPro"/>
</dbReference>
<dbReference type="GO" id="GO:0045892">
    <property type="term" value="P:negative regulation of DNA-templated transcription"/>
    <property type="evidence" value="ECO:0007669"/>
    <property type="project" value="UniProtKB-UniRule"/>
</dbReference>
<dbReference type="Gene3D" id="3.30.450.40">
    <property type="match status" value="1"/>
</dbReference>
<dbReference type="Gene3D" id="3.30.390.60">
    <property type="entry name" value="Heat-inducible transcription repressor hrca homolog, domain 3"/>
    <property type="match status" value="1"/>
</dbReference>
<dbReference type="Gene3D" id="1.10.10.10">
    <property type="entry name" value="Winged helix-like DNA-binding domain superfamily/Winged helix DNA-binding domain"/>
    <property type="match status" value="1"/>
</dbReference>
<dbReference type="HAMAP" id="MF_00081">
    <property type="entry name" value="HrcA"/>
    <property type="match status" value="1"/>
</dbReference>
<dbReference type="InterPro" id="IPR029016">
    <property type="entry name" value="GAF-like_dom_sf"/>
</dbReference>
<dbReference type="InterPro" id="IPR002571">
    <property type="entry name" value="HrcA"/>
</dbReference>
<dbReference type="InterPro" id="IPR021153">
    <property type="entry name" value="HrcA_C"/>
</dbReference>
<dbReference type="InterPro" id="IPR036388">
    <property type="entry name" value="WH-like_DNA-bd_sf"/>
</dbReference>
<dbReference type="InterPro" id="IPR036390">
    <property type="entry name" value="WH_DNA-bd_sf"/>
</dbReference>
<dbReference type="InterPro" id="IPR023120">
    <property type="entry name" value="WHTH_transcript_rep_HrcA_IDD"/>
</dbReference>
<dbReference type="NCBIfam" id="TIGR00331">
    <property type="entry name" value="hrcA"/>
    <property type="match status" value="1"/>
</dbReference>
<dbReference type="PANTHER" id="PTHR34824">
    <property type="entry name" value="HEAT-INDUCIBLE TRANSCRIPTION REPRESSOR HRCA"/>
    <property type="match status" value="1"/>
</dbReference>
<dbReference type="PANTHER" id="PTHR34824:SF1">
    <property type="entry name" value="HEAT-INDUCIBLE TRANSCRIPTION REPRESSOR HRCA"/>
    <property type="match status" value="1"/>
</dbReference>
<dbReference type="Pfam" id="PF01628">
    <property type="entry name" value="HrcA"/>
    <property type="match status" value="1"/>
</dbReference>
<dbReference type="PIRSF" id="PIRSF005485">
    <property type="entry name" value="HrcA"/>
    <property type="match status" value="1"/>
</dbReference>
<dbReference type="SUPFAM" id="SSF55781">
    <property type="entry name" value="GAF domain-like"/>
    <property type="match status" value="1"/>
</dbReference>
<dbReference type="SUPFAM" id="SSF46785">
    <property type="entry name" value="Winged helix' DNA-binding domain"/>
    <property type="match status" value="1"/>
</dbReference>
<accession>Q3B2T3</accession>
<organism>
    <name type="scientific">Chlorobium luteolum (strain DSM 273 / BCRC 81028 / 2530)</name>
    <name type="common">Pelodictyon luteolum</name>
    <dbReference type="NCBI Taxonomy" id="319225"/>
    <lineage>
        <taxon>Bacteria</taxon>
        <taxon>Pseudomonadati</taxon>
        <taxon>Chlorobiota</taxon>
        <taxon>Chlorobiia</taxon>
        <taxon>Chlorobiales</taxon>
        <taxon>Chlorobiaceae</taxon>
        <taxon>Chlorobium/Pelodictyon group</taxon>
        <taxon>Pelodictyon</taxon>
    </lineage>
</organism>
<proteinExistence type="inferred from homology"/>
<reference key="1">
    <citation type="submission" date="2005-08" db="EMBL/GenBank/DDBJ databases">
        <title>Complete sequence of Pelodictyon luteolum DSM 273.</title>
        <authorList>
            <consortium name="US DOE Joint Genome Institute"/>
            <person name="Copeland A."/>
            <person name="Lucas S."/>
            <person name="Lapidus A."/>
            <person name="Barry K."/>
            <person name="Detter J.C."/>
            <person name="Glavina T."/>
            <person name="Hammon N."/>
            <person name="Israni S."/>
            <person name="Pitluck S."/>
            <person name="Bryant D."/>
            <person name="Schmutz J."/>
            <person name="Larimer F."/>
            <person name="Land M."/>
            <person name="Kyrpides N."/>
            <person name="Ivanova N."/>
            <person name="Richardson P."/>
        </authorList>
    </citation>
    <scope>NUCLEOTIDE SEQUENCE [LARGE SCALE GENOMIC DNA]</scope>
    <source>
        <strain>DSM 273 / BCRC 81028 / 2530</strain>
    </source>
</reference>